<organism>
    <name type="scientific">Natrialba magadii (strain ATCC 43099 / DSM 3394 / CCM 3739 / CIP 104546 / IAM 13178 / JCM 8861 / NBRC 102185 / NCIMB 2190 / MS3)</name>
    <name type="common">Natronobacterium magadii</name>
    <dbReference type="NCBI Taxonomy" id="547559"/>
    <lineage>
        <taxon>Archaea</taxon>
        <taxon>Methanobacteriati</taxon>
        <taxon>Methanobacteriota</taxon>
        <taxon>Stenosarchaea group</taxon>
        <taxon>Halobacteria</taxon>
        <taxon>Halobacteriales</taxon>
        <taxon>Natrialbaceae</taxon>
        <taxon>Natrialba</taxon>
    </lineage>
</organism>
<protein>
    <recommendedName>
        <fullName evidence="1">ADP-dependent (S)-NAD(P)H-hydrate dehydratase</fullName>
        <ecNumber evidence="1">4.2.1.136</ecNumber>
    </recommendedName>
    <alternativeName>
        <fullName evidence="1">ADP-dependent NAD(P)HX dehydratase</fullName>
    </alternativeName>
</protein>
<keyword id="KW-0067">ATP-binding</keyword>
<keyword id="KW-0456">Lyase</keyword>
<keyword id="KW-0520">NAD</keyword>
<keyword id="KW-0521">NADP</keyword>
<keyword id="KW-0547">Nucleotide-binding</keyword>
<keyword id="KW-1185">Reference proteome</keyword>
<accession>D3SQW0</accession>
<gene>
    <name evidence="1" type="primary">nnrD</name>
    <name type="ordered locus">Nmag_1014</name>
</gene>
<reference key="1">
    <citation type="journal article" date="2012" name="BMC Genomics">
        <title>A comparative genomics perspective on the genetic content of the alkaliphilic haloarchaeon Natrialba magadii ATCC 43099T.</title>
        <authorList>
            <person name="Siddaramappa S."/>
            <person name="Challacombe J.F."/>
            <person name="Decastro R.E."/>
            <person name="Pfeiffer F."/>
            <person name="Sastre D.E."/>
            <person name="Gimenez M.I."/>
            <person name="Paggi R.A."/>
            <person name="Detter J.C."/>
            <person name="Davenport K.W."/>
            <person name="Goodwin L.A."/>
            <person name="Kyrpides N."/>
            <person name="Tapia R."/>
            <person name="Pitluck S."/>
            <person name="Lucas S."/>
            <person name="Woyke T."/>
            <person name="Maupin-Furlow J.A."/>
        </authorList>
    </citation>
    <scope>NUCLEOTIDE SEQUENCE [LARGE SCALE GENOMIC DNA]</scope>
    <source>
        <strain>ATCC 43099 / DSM 3394 / CCM 3739 / CIP 104546 / IAM 13178 / JCM 8861 / NBRC 102185 / NCIMB 2190 / MS3</strain>
    </source>
</reference>
<feature type="chain" id="PRO_0000416154" description="ADP-dependent (S)-NAD(P)H-hydrate dehydratase">
    <location>
        <begin position="1"/>
        <end position="258"/>
    </location>
</feature>
<feature type="domain" description="YjeF C-terminal" evidence="1">
    <location>
        <begin position="1"/>
        <end position="258"/>
    </location>
</feature>
<feature type="binding site" evidence="1">
    <location>
        <position position="201"/>
    </location>
    <ligand>
        <name>AMP</name>
        <dbReference type="ChEBI" id="CHEBI:456215"/>
    </ligand>
</feature>
<feature type="binding site" evidence="1">
    <location>
        <position position="202"/>
    </location>
    <ligand>
        <name>(6S)-NADPHX</name>
        <dbReference type="ChEBI" id="CHEBI:64076"/>
    </ligand>
</feature>
<evidence type="ECO:0000255" key="1">
    <source>
        <dbReference type="HAMAP-Rule" id="MF_01965"/>
    </source>
</evidence>
<comment type="function">
    <text evidence="1">Catalyzes the dehydration of the S-form of NAD(P)HX at the expense of ADP, which is converted to AMP. Together with NAD(P)HX epimerase, which catalyzes the epimerization of the S- and R-forms, the enzyme allows the repair of both epimers of NAD(P)HX, a damaged form of NAD(P)H that is a result of enzymatic or heat-dependent hydration.</text>
</comment>
<comment type="catalytic activity">
    <reaction evidence="1">
        <text>(6S)-NADHX + ADP = AMP + phosphate + NADH + H(+)</text>
        <dbReference type="Rhea" id="RHEA:32223"/>
        <dbReference type="ChEBI" id="CHEBI:15378"/>
        <dbReference type="ChEBI" id="CHEBI:43474"/>
        <dbReference type="ChEBI" id="CHEBI:57945"/>
        <dbReference type="ChEBI" id="CHEBI:64074"/>
        <dbReference type="ChEBI" id="CHEBI:456215"/>
        <dbReference type="ChEBI" id="CHEBI:456216"/>
        <dbReference type="EC" id="4.2.1.136"/>
    </reaction>
</comment>
<comment type="catalytic activity">
    <reaction evidence="1">
        <text>(6S)-NADPHX + ADP = AMP + phosphate + NADPH + H(+)</text>
        <dbReference type="Rhea" id="RHEA:32235"/>
        <dbReference type="ChEBI" id="CHEBI:15378"/>
        <dbReference type="ChEBI" id="CHEBI:43474"/>
        <dbReference type="ChEBI" id="CHEBI:57783"/>
        <dbReference type="ChEBI" id="CHEBI:64076"/>
        <dbReference type="ChEBI" id="CHEBI:456215"/>
        <dbReference type="ChEBI" id="CHEBI:456216"/>
        <dbReference type="EC" id="4.2.1.136"/>
    </reaction>
</comment>
<comment type="cofactor">
    <cofactor evidence="1">
        <name>Mg(2+)</name>
        <dbReference type="ChEBI" id="CHEBI:18420"/>
    </cofactor>
</comment>
<comment type="subunit">
    <text evidence="1">Homotetramer.</text>
</comment>
<comment type="similarity">
    <text evidence="1">Belongs to the NnrD/CARKD family.</text>
</comment>
<sequence>MGRLQRTLSNISEESDTDNGRVAVVGGSIEYPNQPALVGRAALRTGTDHVRTLVPEALYAPVAGSSPNLLVSPYDGDQFDQDAAADAVDICEWADALVIGPGLVDAEADAIRDVLERTDIPVVVDALAIEPALESDLSRAVLTPSGSEDGPIYEAYGSLRAFTEETGAVITLTGGVDVIVTTGERLENDTGTSALTVAGTGDTLAGITASLLGQEMDRQDAAELGAWILGKSGELATAEYGPGVVATDVIECIPKTIR</sequence>
<proteinExistence type="inferred from homology"/>
<name>NNRD_NATMM</name>
<dbReference type="EC" id="4.2.1.136" evidence="1"/>
<dbReference type="EMBL" id="CP001932">
    <property type="protein sequence ID" value="ADD04598.1"/>
    <property type="molecule type" value="Genomic_DNA"/>
</dbReference>
<dbReference type="RefSeq" id="WP_004216846.1">
    <property type="nucleotide sequence ID" value="NC_013922.1"/>
</dbReference>
<dbReference type="SMR" id="D3SQW0"/>
<dbReference type="STRING" id="547559.Nmag_1014"/>
<dbReference type="PaxDb" id="547559-Nmag_1014"/>
<dbReference type="GeneID" id="8823845"/>
<dbReference type="KEGG" id="nmg:Nmag_1014"/>
<dbReference type="eggNOG" id="arCOG00018">
    <property type="taxonomic scope" value="Archaea"/>
</dbReference>
<dbReference type="HOGENOM" id="CLU_1080123_0_0_2"/>
<dbReference type="OrthoDB" id="15148at2157"/>
<dbReference type="Proteomes" id="UP000001879">
    <property type="component" value="Chromosome"/>
</dbReference>
<dbReference type="GO" id="GO:0052855">
    <property type="term" value="F:ADP-dependent NAD(P)H-hydrate dehydratase activity"/>
    <property type="evidence" value="ECO:0007669"/>
    <property type="project" value="UniProtKB-UniRule"/>
</dbReference>
<dbReference type="GO" id="GO:0005524">
    <property type="term" value="F:ATP binding"/>
    <property type="evidence" value="ECO:0007669"/>
    <property type="project" value="UniProtKB-KW"/>
</dbReference>
<dbReference type="GO" id="GO:0110051">
    <property type="term" value="P:metabolite repair"/>
    <property type="evidence" value="ECO:0007669"/>
    <property type="project" value="TreeGrafter"/>
</dbReference>
<dbReference type="GO" id="GO:0046496">
    <property type="term" value="P:nicotinamide nucleotide metabolic process"/>
    <property type="evidence" value="ECO:0007669"/>
    <property type="project" value="UniProtKB-UniRule"/>
</dbReference>
<dbReference type="CDD" id="cd01171">
    <property type="entry name" value="YXKO-related"/>
    <property type="match status" value="1"/>
</dbReference>
<dbReference type="Gene3D" id="3.40.1190.20">
    <property type="match status" value="1"/>
</dbReference>
<dbReference type="HAMAP" id="MF_01965">
    <property type="entry name" value="NADHX_dehydratase"/>
    <property type="match status" value="1"/>
</dbReference>
<dbReference type="InterPro" id="IPR000631">
    <property type="entry name" value="CARKD"/>
</dbReference>
<dbReference type="InterPro" id="IPR029056">
    <property type="entry name" value="Ribokinase-like"/>
</dbReference>
<dbReference type="NCBIfam" id="TIGR00196">
    <property type="entry name" value="yjeF_cterm"/>
    <property type="match status" value="1"/>
</dbReference>
<dbReference type="PANTHER" id="PTHR12592:SF0">
    <property type="entry name" value="ATP-DEPENDENT (S)-NAD(P)H-HYDRATE DEHYDRATASE"/>
    <property type="match status" value="1"/>
</dbReference>
<dbReference type="PANTHER" id="PTHR12592">
    <property type="entry name" value="ATP-DEPENDENT (S)-NAD(P)H-HYDRATE DEHYDRATASE FAMILY MEMBER"/>
    <property type="match status" value="1"/>
</dbReference>
<dbReference type="Pfam" id="PF01256">
    <property type="entry name" value="Carb_kinase"/>
    <property type="match status" value="1"/>
</dbReference>
<dbReference type="SUPFAM" id="SSF53613">
    <property type="entry name" value="Ribokinase-like"/>
    <property type="match status" value="1"/>
</dbReference>
<dbReference type="PROSITE" id="PS51383">
    <property type="entry name" value="YJEF_C_3"/>
    <property type="match status" value="1"/>
</dbReference>